<organism>
    <name type="scientific">Ceratotherium simum</name>
    <name type="common">White rhinoceros</name>
    <name type="synonym">Square-lipped rhinoceros</name>
    <dbReference type="NCBI Taxonomy" id="9807"/>
    <lineage>
        <taxon>Eukaryota</taxon>
        <taxon>Metazoa</taxon>
        <taxon>Chordata</taxon>
        <taxon>Craniata</taxon>
        <taxon>Vertebrata</taxon>
        <taxon>Euteleostomi</taxon>
        <taxon>Mammalia</taxon>
        <taxon>Eutheria</taxon>
        <taxon>Laurasiatheria</taxon>
        <taxon>Perissodactyla</taxon>
        <taxon>Rhinocerotidae</taxon>
        <taxon>Ceratotherium</taxon>
    </lineage>
</organism>
<reference key="1">
    <citation type="journal article" date="1997" name="Mol. Phylogenet. Evol.">
        <title>The complete mitochondrial DNA sequence of the white rhinoceros, Ceratotherium simum, and comparison with the mtDNA sequence of the Indian rhinoceros, Rhinoceros unicornis.</title>
        <authorList>
            <person name="Xu X."/>
            <person name="Arnason U."/>
        </authorList>
    </citation>
    <scope>NUCLEOTIDE SEQUENCE [GENOMIC DNA]</scope>
</reference>
<sequence>MNPIVFSTILTTAIMGTMIVMTSSHWLMIWIGFEMNLLAIIPILMKKFNPRAMEAATKYFLTQATASMLLMMAIIINLMFSSQWTITKIFNPTASIIMTSALIMKLGLSPFHFWVPEVTQGIPLVSGLILLTWQKLAPMSVLYQIAPSINLDMLMTSALLSILVGGWGGLNQTQLRKIMAYSSIAHMGWMTAILTYNPTMTALNMLIYIMMTLTTFMLFMLNSSTTTLSLSHTWNKTPLITSLILITMLSLGGLPPLSGFIPKWMIIQELTKNDSIILPTSMAIMALLNLYFYMRLTYSTSLTMFPSTNNMKMKWQFENPKRMNFLPTLIIMSTLLLPLTPIMSTLN</sequence>
<comment type="function">
    <text evidence="1">Core subunit of the mitochondrial membrane respiratory chain NADH dehydrogenase (Complex I) which catalyzes electron transfer from NADH through the respiratory chain, using ubiquinone as an electron acceptor. Essential for the catalytic activity and assembly of complex I.</text>
</comment>
<comment type="catalytic activity">
    <reaction evidence="1">
        <text>a ubiquinone + NADH + 5 H(+)(in) = a ubiquinol + NAD(+) + 4 H(+)(out)</text>
        <dbReference type="Rhea" id="RHEA:29091"/>
        <dbReference type="Rhea" id="RHEA-COMP:9565"/>
        <dbReference type="Rhea" id="RHEA-COMP:9566"/>
        <dbReference type="ChEBI" id="CHEBI:15378"/>
        <dbReference type="ChEBI" id="CHEBI:16389"/>
        <dbReference type="ChEBI" id="CHEBI:17976"/>
        <dbReference type="ChEBI" id="CHEBI:57540"/>
        <dbReference type="ChEBI" id="CHEBI:57945"/>
        <dbReference type="EC" id="7.1.1.2"/>
    </reaction>
</comment>
<comment type="subunit">
    <text evidence="1 2">Core subunit of respiratory chain NADH dehydrogenase (Complex I) which is composed of 45 different subunits. Interacts with TMEM242 (By similarity).</text>
</comment>
<comment type="subcellular location">
    <subcellularLocation>
        <location evidence="2">Mitochondrion inner membrane</location>
        <topology evidence="3">Multi-pass membrane protein</topology>
    </subcellularLocation>
</comment>
<comment type="similarity">
    <text evidence="4">Belongs to the complex I subunit 2 family.</text>
</comment>
<protein>
    <recommendedName>
        <fullName evidence="1">NADH-ubiquinone oxidoreductase chain 2</fullName>
        <ecNumber evidence="1">7.1.1.2</ecNumber>
    </recommendedName>
    <alternativeName>
        <fullName>NADH dehydrogenase subunit 2</fullName>
    </alternativeName>
</protein>
<geneLocation type="mitochondrion"/>
<keyword id="KW-0249">Electron transport</keyword>
<keyword id="KW-0472">Membrane</keyword>
<keyword id="KW-0496">Mitochondrion</keyword>
<keyword id="KW-0999">Mitochondrion inner membrane</keyword>
<keyword id="KW-0520">NAD</keyword>
<keyword id="KW-0679">Respiratory chain</keyword>
<keyword id="KW-1278">Translocase</keyword>
<keyword id="KW-0812">Transmembrane</keyword>
<keyword id="KW-1133">Transmembrane helix</keyword>
<keyword id="KW-0813">Transport</keyword>
<keyword id="KW-0830">Ubiquinone</keyword>
<proteinExistence type="inferred from homology"/>
<name>NU2M_CERSI</name>
<accession>O03197</accession>
<evidence type="ECO:0000250" key="1">
    <source>
        <dbReference type="UniProtKB" id="P03891"/>
    </source>
</evidence>
<evidence type="ECO:0000250" key="2">
    <source>
        <dbReference type="UniProtKB" id="P03892"/>
    </source>
</evidence>
<evidence type="ECO:0000255" key="3"/>
<evidence type="ECO:0000305" key="4"/>
<dbReference type="EC" id="7.1.1.2" evidence="1"/>
<dbReference type="EMBL" id="Y07726">
    <property type="protein sequence ID" value="CAA69007.1"/>
    <property type="molecule type" value="Genomic_DNA"/>
</dbReference>
<dbReference type="RefSeq" id="NP_007434.1">
    <property type="nucleotide sequence ID" value="NC_001808.1"/>
</dbReference>
<dbReference type="SMR" id="O03197"/>
<dbReference type="GeneID" id="808100"/>
<dbReference type="CTD" id="4536"/>
<dbReference type="OMA" id="HFWVPEV"/>
<dbReference type="GO" id="GO:0005743">
    <property type="term" value="C:mitochondrial inner membrane"/>
    <property type="evidence" value="ECO:0000250"/>
    <property type="project" value="UniProtKB"/>
</dbReference>
<dbReference type="GO" id="GO:0008137">
    <property type="term" value="F:NADH dehydrogenase (ubiquinone) activity"/>
    <property type="evidence" value="ECO:0000250"/>
    <property type="project" value="UniProtKB"/>
</dbReference>
<dbReference type="GO" id="GO:0006120">
    <property type="term" value="P:mitochondrial electron transport, NADH to ubiquinone"/>
    <property type="evidence" value="ECO:0000250"/>
    <property type="project" value="UniProtKB"/>
</dbReference>
<dbReference type="GO" id="GO:0032981">
    <property type="term" value="P:mitochondrial respiratory chain complex I assembly"/>
    <property type="evidence" value="ECO:0000250"/>
    <property type="project" value="UniProtKB"/>
</dbReference>
<dbReference type="InterPro" id="IPR050175">
    <property type="entry name" value="Complex_I_Subunit_2"/>
</dbReference>
<dbReference type="InterPro" id="IPR010933">
    <property type="entry name" value="NADH_DH_su2_C"/>
</dbReference>
<dbReference type="InterPro" id="IPR003917">
    <property type="entry name" value="NADH_UbQ_OxRdtase_chain2"/>
</dbReference>
<dbReference type="InterPro" id="IPR001750">
    <property type="entry name" value="ND/Mrp_TM"/>
</dbReference>
<dbReference type="PANTHER" id="PTHR46552">
    <property type="entry name" value="NADH-UBIQUINONE OXIDOREDUCTASE CHAIN 2"/>
    <property type="match status" value="1"/>
</dbReference>
<dbReference type="PANTHER" id="PTHR46552:SF1">
    <property type="entry name" value="NADH-UBIQUINONE OXIDOREDUCTASE CHAIN 2"/>
    <property type="match status" value="1"/>
</dbReference>
<dbReference type="Pfam" id="PF06444">
    <property type="entry name" value="NADH_dehy_S2_C"/>
    <property type="match status" value="1"/>
</dbReference>
<dbReference type="Pfam" id="PF00361">
    <property type="entry name" value="Proton_antipo_M"/>
    <property type="match status" value="1"/>
</dbReference>
<dbReference type="PRINTS" id="PR01436">
    <property type="entry name" value="NADHDHGNASE2"/>
</dbReference>
<feature type="chain" id="PRO_0000117568" description="NADH-ubiquinone oxidoreductase chain 2">
    <location>
        <begin position="1"/>
        <end position="347"/>
    </location>
</feature>
<feature type="transmembrane region" description="Helical" evidence="3">
    <location>
        <begin position="1"/>
        <end position="21"/>
    </location>
</feature>
<feature type="transmembrane region" description="Helical" evidence="3">
    <location>
        <begin position="25"/>
        <end position="45"/>
    </location>
</feature>
<feature type="transmembrane region" description="Helical" evidence="3">
    <location>
        <begin position="60"/>
        <end position="80"/>
    </location>
</feature>
<feature type="transmembrane region" description="Helical" evidence="3">
    <location>
        <begin position="89"/>
        <end position="109"/>
    </location>
</feature>
<feature type="transmembrane region" description="Helical" evidence="3">
    <location>
        <begin position="111"/>
        <end position="131"/>
    </location>
</feature>
<feature type="transmembrane region" description="Helical" evidence="3">
    <location>
        <begin position="149"/>
        <end position="169"/>
    </location>
</feature>
<feature type="transmembrane region" description="Helical" evidence="3">
    <location>
        <begin position="178"/>
        <end position="198"/>
    </location>
</feature>
<feature type="transmembrane region" description="Helical" evidence="3">
    <location>
        <begin position="201"/>
        <end position="221"/>
    </location>
</feature>
<feature type="transmembrane region" description="Helical" evidence="3">
    <location>
        <begin position="242"/>
        <end position="262"/>
    </location>
</feature>
<feature type="transmembrane region" description="Helical" evidence="3">
    <location>
        <begin position="274"/>
        <end position="294"/>
    </location>
</feature>
<feature type="transmembrane region" description="Helical" evidence="3">
    <location>
        <begin position="323"/>
        <end position="343"/>
    </location>
</feature>
<gene>
    <name evidence="1" type="primary">MT-ND2</name>
    <name type="synonym">MTND2</name>
    <name type="synonym">NADH2</name>
    <name type="synonym">ND2</name>
</gene>